<gene>
    <name type="primary">chk-1</name>
    <name type="ORF">CBG06670</name>
</gene>
<evidence type="ECO:0000250" key="1"/>
<evidence type="ECO:0000255" key="2">
    <source>
        <dbReference type="PROSITE-ProRule" id="PRU00159"/>
    </source>
</evidence>
<evidence type="ECO:0000255" key="3">
    <source>
        <dbReference type="PROSITE-ProRule" id="PRU10027"/>
    </source>
</evidence>
<evidence type="ECO:0000256" key="4">
    <source>
        <dbReference type="SAM" id="MobiDB-lite"/>
    </source>
</evidence>
<evidence type="ECO:0000305" key="5"/>
<reference key="1">
    <citation type="journal article" date="2003" name="PLoS Biol.">
        <title>The genome sequence of Caenorhabditis briggsae: a platform for comparative genomics.</title>
        <authorList>
            <person name="Stein L.D."/>
            <person name="Bao Z."/>
            <person name="Blasiar D."/>
            <person name="Blumenthal T."/>
            <person name="Brent M.R."/>
            <person name="Chen N."/>
            <person name="Chinwalla A."/>
            <person name="Clarke L."/>
            <person name="Clee C."/>
            <person name="Coghlan A."/>
            <person name="Coulson A."/>
            <person name="D'Eustachio P."/>
            <person name="Fitch D.H.A."/>
            <person name="Fulton L.A."/>
            <person name="Fulton R.E."/>
            <person name="Griffiths-Jones S."/>
            <person name="Harris T.W."/>
            <person name="Hillier L.W."/>
            <person name="Kamath R."/>
            <person name="Kuwabara P.E."/>
            <person name="Mardis E.R."/>
            <person name="Marra M.A."/>
            <person name="Miner T.L."/>
            <person name="Minx P."/>
            <person name="Mullikin J.C."/>
            <person name="Plumb R.W."/>
            <person name="Rogers J."/>
            <person name="Schein J.E."/>
            <person name="Sohrmann M."/>
            <person name="Spieth J."/>
            <person name="Stajich J.E."/>
            <person name="Wei C."/>
            <person name="Willey D."/>
            <person name="Wilson R.K."/>
            <person name="Durbin R.M."/>
            <person name="Waterston R.H."/>
        </authorList>
    </citation>
    <scope>NUCLEOTIDE SEQUENCE [LARGE SCALE GENOMIC DNA]</scope>
    <source>
        <strain>AF16</strain>
    </source>
</reference>
<protein>
    <recommendedName>
        <fullName>Serine/threonine-protein kinase chk-1</fullName>
        <ecNumber>2.7.11.1</ecNumber>
    </recommendedName>
</protein>
<name>CHK1_CAEBR</name>
<feature type="chain" id="PRO_0000085853" description="Serine/threonine-protein kinase chk-1">
    <location>
        <begin position="1"/>
        <end position="493"/>
    </location>
</feature>
<feature type="domain" description="Protein kinase" evidence="2">
    <location>
        <begin position="26"/>
        <end position="286"/>
    </location>
</feature>
<feature type="region of interest" description="Disordered" evidence="4">
    <location>
        <begin position="308"/>
        <end position="348"/>
    </location>
</feature>
<feature type="compositionally biased region" description="Polar residues" evidence="4">
    <location>
        <begin position="312"/>
        <end position="324"/>
    </location>
</feature>
<feature type="compositionally biased region" description="Basic and acidic residues" evidence="4">
    <location>
        <begin position="333"/>
        <end position="344"/>
    </location>
</feature>
<feature type="active site" description="Proton acceptor" evidence="2 3">
    <location>
        <position position="150"/>
    </location>
</feature>
<feature type="binding site" evidence="2">
    <location>
        <begin position="32"/>
        <end position="40"/>
    </location>
    <ligand>
        <name>ATP</name>
        <dbReference type="ChEBI" id="CHEBI:30616"/>
    </ligand>
</feature>
<feature type="binding site" evidence="2">
    <location>
        <position position="56"/>
    </location>
    <ligand>
        <name>ATP</name>
        <dbReference type="ChEBI" id="CHEBI:30616"/>
    </ligand>
</feature>
<comment type="function">
    <text evidence="1">Serine/threonine-protein kinase which is required for checkpoint-mediated cell cycle arrest and activation of DNA repair in response to the presence of DNA damage or unreplicated DNA. May also negatively regulate cell cycle progression during unperturbed cell cycles. Required for checkpoint mediated cell cycle arrest in response to DNA damage in germline cells. Essential for embryogenesis (By similarity).</text>
</comment>
<comment type="catalytic activity">
    <reaction>
        <text>L-seryl-[protein] + ATP = O-phospho-L-seryl-[protein] + ADP + H(+)</text>
        <dbReference type="Rhea" id="RHEA:17989"/>
        <dbReference type="Rhea" id="RHEA-COMP:9863"/>
        <dbReference type="Rhea" id="RHEA-COMP:11604"/>
        <dbReference type="ChEBI" id="CHEBI:15378"/>
        <dbReference type="ChEBI" id="CHEBI:29999"/>
        <dbReference type="ChEBI" id="CHEBI:30616"/>
        <dbReference type="ChEBI" id="CHEBI:83421"/>
        <dbReference type="ChEBI" id="CHEBI:456216"/>
        <dbReference type="EC" id="2.7.11.1"/>
    </reaction>
</comment>
<comment type="catalytic activity">
    <reaction>
        <text>L-threonyl-[protein] + ATP = O-phospho-L-threonyl-[protein] + ADP + H(+)</text>
        <dbReference type="Rhea" id="RHEA:46608"/>
        <dbReference type="Rhea" id="RHEA-COMP:11060"/>
        <dbReference type="Rhea" id="RHEA-COMP:11605"/>
        <dbReference type="ChEBI" id="CHEBI:15378"/>
        <dbReference type="ChEBI" id="CHEBI:30013"/>
        <dbReference type="ChEBI" id="CHEBI:30616"/>
        <dbReference type="ChEBI" id="CHEBI:61977"/>
        <dbReference type="ChEBI" id="CHEBI:456216"/>
        <dbReference type="EC" id="2.7.11.1"/>
    </reaction>
</comment>
<comment type="subcellular location">
    <subcellularLocation>
        <location evidence="1">Cytoplasm</location>
    </subcellularLocation>
    <subcellularLocation>
        <location evidence="1">Nucleus</location>
    </subcellularLocation>
</comment>
<comment type="similarity">
    <text evidence="5">Belongs to the protein kinase superfamily. CAMK Ser/Thr protein kinase family. NIM1 subfamily.</text>
</comment>
<organism>
    <name type="scientific">Caenorhabditis briggsae</name>
    <dbReference type="NCBI Taxonomy" id="6238"/>
    <lineage>
        <taxon>Eukaryota</taxon>
        <taxon>Metazoa</taxon>
        <taxon>Ecdysozoa</taxon>
        <taxon>Nematoda</taxon>
        <taxon>Chromadorea</taxon>
        <taxon>Rhabditida</taxon>
        <taxon>Rhabditina</taxon>
        <taxon>Rhabditomorpha</taxon>
        <taxon>Rhabditoidea</taxon>
        <taxon>Rhabditidae</taxon>
        <taxon>Peloderinae</taxon>
        <taxon>Caenorhabditis</taxon>
    </lineage>
</organism>
<proteinExistence type="inferred from homology"/>
<sequence length="493" mass="56402">MSADVSTKPRGSLPIPTAPGESNECYRVIRTLGEGAFGEVLLIVNNKNPDMAVAMKKMQITTQANTNNIRKEFLIQQKLSKVGHDNFIRAIGMRTENGFHFLFLEYADGGELFDKIEPDHGMPTAIAQFYFRQLIEGLKYIHDCDIVHRDIKPENLLLTTSHVLKISDFGMATLYRNEGKERLLDLSCGTIPYAAPEVCAGGKYRGPPIDVWSSGIVLIAMLTGELPWDRASDSSYAYLQWLGNNNLDENPWRKMDVRALCMLRRILTDNVHRRATIEQIKTDPWFTHNYGKLEMTYGRPLKRARYADENSPDCNISSTQQADAVSTAKRRHLETPDKVAHVERQNASFSQPTRTEDLLLTQNIDMSQNNTNLLERMVCRMTRFCTKFDVPTSYRQLIHASEHAGYEVRQTADNRLLVTFREVSMMVTLYSLKTESRVMVDFRRSRGDGIQFKKMFLEVRNRMNDSICVDGQNFLEDCGYVPRKPQFVREANA</sequence>
<accession>Q61RA2</accession>
<accession>A8X2T7</accession>
<dbReference type="EC" id="2.7.11.1"/>
<dbReference type="EMBL" id="HE601320">
    <property type="protein sequence ID" value="CAP26947.1"/>
    <property type="molecule type" value="Genomic_DNA"/>
</dbReference>
<dbReference type="SMR" id="Q61RA2"/>
<dbReference type="FunCoup" id="Q61RA2">
    <property type="interactions" value="2541"/>
</dbReference>
<dbReference type="STRING" id="6238.Q61RA2"/>
<dbReference type="EnsemblMetazoa" id="CBG06670.1">
    <property type="protein sequence ID" value="CBG06670.1"/>
    <property type="gene ID" value="WBGene00028914"/>
</dbReference>
<dbReference type="KEGG" id="cbr:CBG_06670"/>
<dbReference type="CTD" id="8589581"/>
<dbReference type="WormBase" id="CBG06670">
    <property type="protein sequence ID" value="CBP15640"/>
    <property type="gene ID" value="WBGene00028914"/>
    <property type="gene designation" value="Cbr-chk-1"/>
</dbReference>
<dbReference type="eggNOG" id="KOG0590">
    <property type="taxonomic scope" value="Eukaryota"/>
</dbReference>
<dbReference type="HOGENOM" id="CLU_000288_59_8_1"/>
<dbReference type="InParanoid" id="Q61RA2"/>
<dbReference type="OMA" id="GYTCKVG"/>
<dbReference type="OrthoDB" id="539158at2759"/>
<dbReference type="Proteomes" id="UP000008549">
    <property type="component" value="Unassembled WGS sequence"/>
</dbReference>
<dbReference type="GO" id="GO:0005737">
    <property type="term" value="C:cytoplasm"/>
    <property type="evidence" value="ECO:0007669"/>
    <property type="project" value="UniProtKB-SubCell"/>
</dbReference>
<dbReference type="GO" id="GO:0005634">
    <property type="term" value="C:nucleus"/>
    <property type="evidence" value="ECO:0007669"/>
    <property type="project" value="UniProtKB-SubCell"/>
</dbReference>
<dbReference type="GO" id="GO:0005524">
    <property type="term" value="F:ATP binding"/>
    <property type="evidence" value="ECO:0007669"/>
    <property type="project" value="UniProtKB-KW"/>
</dbReference>
<dbReference type="GO" id="GO:0035402">
    <property type="term" value="F:histone H3T11 kinase activity"/>
    <property type="evidence" value="ECO:0000318"/>
    <property type="project" value="GO_Central"/>
</dbReference>
<dbReference type="GO" id="GO:0106310">
    <property type="term" value="F:protein serine kinase activity"/>
    <property type="evidence" value="ECO:0007669"/>
    <property type="project" value="RHEA"/>
</dbReference>
<dbReference type="GO" id="GO:0007095">
    <property type="term" value="P:mitotic G2 DNA damage checkpoint signaling"/>
    <property type="evidence" value="ECO:0000318"/>
    <property type="project" value="GO_Central"/>
</dbReference>
<dbReference type="FunFam" id="1.10.510.10:FF:000511">
    <property type="entry name" value="Serine/threonine-protein kinase Chk1"/>
    <property type="match status" value="1"/>
</dbReference>
<dbReference type="FunFam" id="3.30.200.20:FF:000229">
    <property type="entry name" value="Serine/threonine-protein kinase Chk1"/>
    <property type="match status" value="1"/>
</dbReference>
<dbReference type="Gene3D" id="3.30.310.80">
    <property type="entry name" value="Kinase associated domain 1, KA1"/>
    <property type="match status" value="1"/>
</dbReference>
<dbReference type="Gene3D" id="3.30.200.20">
    <property type="entry name" value="Phosphorylase Kinase, domain 1"/>
    <property type="match status" value="1"/>
</dbReference>
<dbReference type="Gene3D" id="1.10.510.10">
    <property type="entry name" value="Transferase(Phosphotransferase) domain 1"/>
    <property type="match status" value="1"/>
</dbReference>
<dbReference type="InterPro" id="IPR011009">
    <property type="entry name" value="Kinase-like_dom_sf"/>
</dbReference>
<dbReference type="InterPro" id="IPR000719">
    <property type="entry name" value="Prot_kinase_dom"/>
</dbReference>
<dbReference type="InterPro" id="IPR017441">
    <property type="entry name" value="Protein_kinase_ATP_BS"/>
</dbReference>
<dbReference type="InterPro" id="IPR008271">
    <property type="entry name" value="Ser/Thr_kinase_AS"/>
</dbReference>
<dbReference type="PANTHER" id="PTHR24346">
    <property type="entry name" value="MAP/MICROTUBULE AFFINITY-REGULATING KINASE"/>
    <property type="match status" value="1"/>
</dbReference>
<dbReference type="PANTHER" id="PTHR24346:SF107">
    <property type="entry name" value="SERINE_THREONINE-PROTEIN KINASE CHK1"/>
    <property type="match status" value="1"/>
</dbReference>
<dbReference type="Pfam" id="PF00069">
    <property type="entry name" value="Pkinase"/>
    <property type="match status" value="1"/>
</dbReference>
<dbReference type="SMART" id="SM00220">
    <property type="entry name" value="S_TKc"/>
    <property type="match status" value="1"/>
</dbReference>
<dbReference type="SUPFAM" id="SSF56112">
    <property type="entry name" value="Protein kinase-like (PK-like)"/>
    <property type="match status" value="1"/>
</dbReference>
<dbReference type="PROSITE" id="PS00107">
    <property type="entry name" value="PROTEIN_KINASE_ATP"/>
    <property type="match status" value="1"/>
</dbReference>
<dbReference type="PROSITE" id="PS50011">
    <property type="entry name" value="PROTEIN_KINASE_DOM"/>
    <property type="match status" value="1"/>
</dbReference>
<dbReference type="PROSITE" id="PS00108">
    <property type="entry name" value="PROTEIN_KINASE_ST"/>
    <property type="match status" value="1"/>
</dbReference>
<keyword id="KW-0067">ATP-binding</keyword>
<keyword id="KW-0131">Cell cycle</keyword>
<keyword id="KW-0963">Cytoplasm</keyword>
<keyword id="KW-0217">Developmental protein</keyword>
<keyword id="KW-0227">DNA damage</keyword>
<keyword id="KW-0418">Kinase</keyword>
<keyword id="KW-0547">Nucleotide-binding</keyword>
<keyword id="KW-0539">Nucleus</keyword>
<keyword id="KW-1185">Reference proteome</keyword>
<keyword id="KW-0723">Serine/threonine-protein kinase</keyword>
<keyword id="KW-0808">Transferase</keyword>